<reference key="1">
    <citation type="journal article" date="2003" name="Proc. Natl. Acad. Sci. U.S.A.">
        <title>The genome sequence of Clostridium tetani, the causative agent of tetanus disease.</title>
        <authorList>
            <person name="Brueggemann H."/>
            <person name="Baeumer S."/>
            <person name="Fricke W.F."/>
            <person name="Wiezer A."/>
            <person name="Liesegang H."/>
            <person name="Decker I."/>
            <person name="Herzberg C."/>
            <person name="Martinez-Arias R."/>
            <person name="Merkl R."/>
            <person name="Henne A."/>
            <person name="Gottschalk G."/>
        </authorList>
    </citation>
    <scope>NUCLEOTIDE SEQUENCE [LARGE SCALE GENOMIC DNA]</scope>
    <source>
        <strain>Massachusetts / E88</strain>
    </source>
</reference>
<gene>
    <name evidence="1" type="primary">atpB2</name>
    <name type="ordered locus">CTC_02327</name>
</gene>
<feature type="chain" id="PRO_0000322495" description="V-type ATP synthase beta chain 2">
    <location>
        <begin position="1"/>
        <end position="460"/>
    </location>
</feature>
<evidence type="ECO:0000255" key="1">
    <source>
        <dbReference type="HAMAP-Rule" id="MF_00310"/>
    </source>
</evidence>
<proteinExistence type="inferred from homology"/>
<accession>Q891P2</accession>
<name>VATB2_CLOTE</name>
<sequence length="460" mass="51397">MRKEYLLLDRVQGPLVVLSEVEGVAYDEIVEIKIANGETKKGRVVQLQGDKAVIQVFESTTGMSLQNTTISFTGKPLEISLSREVLGREFNGIGEAIDGRGEIYSLKKYNVNGRPINPVARKYPRNFIQTGISSIDCLTTLIRGQKLPIFSGNGMPHNELAAQIIRQAKIGGGDGEEKFAVVFAAMGIKHDDKEFFRKKFEEAGVIDRLVMFTNLADDPIVERITTPRAALTTAEYLAFEEGMHILVIMTDITNYCEALRELSSSREEVPSRKGYPGYLYSDLASLYERAGMMEGKDGSITQLPILTMPNDDITHPIPDLTGYITEGQIVLSRDLSGKNIYPPVNILPSLSRLMKDGIGEGYTREDHAEVSNQLFASYSYVQDVISLSQVIGEDELSPVDKIYMEFGREFESKFLNQGFEDNRSIDETLDLAWEILSILPKSQLDRVSPEALEKHYRGDK</sequence>
<dbReference type="EMBL" id="AE015927">
    <property type="protein sequence ID" value="AAO36803.1"/>
    <property type="molecule type" value="Genomic_DNA"/>
</dbReference>
<dbReference type="RefSeq" id="WP_011100464.1">
    <property type="nucleotide sequence ID" value="NC_004557.1"/>
</dbReference>
<dbReference type="SMR" id="Q891P2"/>
<dbReference type="STRING" id="212717.CTC_02327"/>
<dbReference type="GeneID" id="24252912"/>
<dbReference type="KEGG" id="ctc:CTC_02327"/>
<dbReference type="HOGENOM" id="CLU_022916_0_0_9"/>
<dbReference type="OrthoDB" id="9802718at2"/>
<dbReference type="Proteomes" id="UP000001412">
    <property type="component" value="Chromosome"/>
</dbReference>
<dbReference type="GO" id="GO:0005524">
    <property type="term" value="F:ATP binding"/>
    <property type="evidence" value="ECO:0007669"/>
    <property type="project" value="UniProtKB-UniRule"/>
</dbReference>
<dbReference type="GO" id="GO:0046933">
    <property type="term" value="F:proton-transporting ATP synthase activity, rotational mechanism"/>
    <property type="evidence" value="ECO:0007669"/>
    <property type="project" value="UniProtKB-UniRule"/>
</dbReference>
<dbReference type="GO" id="GO:0046961">
    <property type="term" value="F:proton-transporting ATPase activity, rotational mechanism"/>
    <property type="evidence" value="ECO:0007669"/>
    <property type="project" value="TreeGrafter"/>
</dbReference>
<dbReference type="GO" id="GO:0042777">
    <property type="term" value="P:proton motive force-driven plasma membrane ATP synthesis"/>
    <property type="evidence" value="ECO:0007669"/>
    <property type="project" value="UniProtKB-UniRule"/>
</dbReference>
<dbReference type="CDD" id="cd18112">
    <property type="entry name" value="ATP-synt_V_A-type_beta_C"/>
    <property type="match status" value="1"/>
</dbReference>
<dbReference type="CDD" id="cd18118">
    <property type="entry name" value="ATP-synt_V_A-type_beta_N"/>
    <property type="match status" value="1"/>
</dbReference>
<dbReference type="CDD" id="cd01135">
    <property type="entry name" value="V_A-ATPase_B"/>
    <property type="match status" value="1"/>
</dbReference>
<dbReference type="Gene3D" id="3.40.50.12240">
    <property type="match status" value="1"/>
</dbReference>
<dbReference type="HAMAP" id="MF_00310">
    <property type="entry name" value="ATP_synth_B_arch"/>
    <property type="match status" value="1"/>
</dbReference>
<dbReference type="InterPro" id="IPR055190">
    <property type="entry name" value="ATP-synt_VA_C"/>
</dbReference>
<dbReference type="InterPro" id="IPR020003">
    <property type="entry name" value="ATPase_a/bsu_AS"/>
</dbReference>
<dbReference type="InterPro" id="IPR004100">
    <property type="entry name" value="ATPase_F1/V1/A1_a/bsu_N"/>
</dbReference>
<dbReference type="InterPro" id="IPR000194">
    <property type="entry name" value="ATPase_F1/V1/A1_a/bsu_nucl-bd"/>
</dbReference>
<dbReference type="InterPro" id="IPR027417">
    <property type="entry name" value="P-loop_NTPase"/>
</dbReference>
<dbReference type="InterPro" id="IPR022879">
    <property type="entry name" value="V-ATPase_su_B/beta"/>
</dbReference>
<dbReference type="NCBIfam" id="NF003235">
    <property type="entry name" value="PRK04196.1"/>
    <property type="match status" value="1"/>
</dbReference>
<dbReference type="PANTHER" id="PTHR43389">
    <property type="entry name" value="V-TYPE PROTON ATPASE SUBUNIT B"/>
    <property type="match status" value="1"/>
</dbReference>
<dbReference type="PANTHER" id="PTHR43389:SF4">
    <property type="entry name" value="V-TYPE PROTON ATPASE SUBUNIT B"/>
    <property type="match status" value="1"/>
</dbReference>
<dbReference type="Pfam" id="PF00006">
    <property type="entry name" value="ATP-synt_ab"/>
    <property type="match status" value="1"/>
</dbReference>
<dbReference type="Pfam" id="PF02874">
    <property type="entry name" value="ATP-synt_ab_N"/>
    <property type="match status" value="1"/>
</dbReference>
<dbReference type="Pfam" id="PF22919">
    <property type="entry name" value="ATP-synt_VA_C"/>
    <property type="match status" value="1"/>
</dbReference>
<dbReference type="SUPFAM" id="SSF52540">
    <property type="entry name" value="P-loop containing nucleoside triphosphate hydrolases"/>
    <property type="match status" value="1"/>
</dbReference>
<dbReference type="PROSITE" id="PS00152">
    <property type="entry name" value="ATPASE_ALPHA_BETA"/>
    <property type="match status" value="1"/>
</dbReference>
<organism>
    <name type="scientific">Clostridium tetani (strain Massachusetts / E88)</name>
    <dbReference type="NCBI Taxonomy" id="212717"/>
    <lineage>
        <taxon>Bacteria</taxon>
        <taxon>Bacillati</taxon>
        <taxon>Bacillota</taxon>
        <taxon>Clostridia</taxon>
        <taxon>Eubacteriales</taxon>
        <taxon>Clostridiaceae</taxon>
        <taxon>Clostridium</taxon>
    </lineage>
</organism>
<comment type="function">
    <text evidence="1">Produces ATP from ADP in the presence of a proton gradient across the membrane. The V-type beta chain is a regulatory subunit.</text>
</comment>
<comment type="similarity">
    <text evidence="1">Belongs to the ATPase alpha/beta chains family.</text>
</comment>
<keyword id="KW-0066">ATP synthesis</keyword>
<keyword id="KW-0375">Hydrogen ion transport</keyword>
<keyword id="KW-0406">Ion transport</keyword>
<keyword id="KW-1185">Reference proteome</keyword>
<keyword id="KW-0813">Transport</keyword>
<protein>
    <recommendedName>
        <fullName evidence="1">V-type ATP synthase beta chain 2</fullName>
    </recommendedName>
    <alternativeName>
        <fullName evidence="1">V-ATPase subunit B 2</fullName>
    </alternativeName>
</protein>